<name>ATPL_SHEB5</name>
<gene>
    <name evidence="1" type="primary">atpE</name>
    <name type="ordered locus">Sbal_4371</name>
</gene>
<sequence length="83" mass="8483">METILGMTAIAVALLIGMGALGTAIGFGLLGGKFLEGAARQPEMAPMLQVKMFIVAGLLDAVTMIGVGIALFMLFTNPLGAML</sequence>
<accession>A3DAR9</accession>
<proteinExistence type="inferred from homology"/>
<reference key="1">
    <citation type="submission" date="2007-02" db="EMBL/GenBank/DDBJ databases">
        <title>Complete sequence of chromosome of Shewanella baltica OS155.</title>
        <authorList>
            <consortium name="US DOE Joint Genome Institute"/>
            <person name="Copeland A."/>
            <person name="Lucas S."/>
            <person name="Lapidus A."/>
            <person name="Barry K."/>
            <person name="Detter J.C."/>
            <person name="Glavina del Rio T."/>
            <person name="Hammon N."/>
            <person name="Israni S."/>
            <person name="Dalin E."/>
            <person name="Tice H."/>
            <person name="Pitluck S."/>
            <person name="Sims D.R."/>
            <person name="Brettin T."/>
            <person name="Bruce D."/>
            <person name="Han C."/>
            <person name="Tapia R."/>
            <person name="Brainard J."/>
            <person name="Schmutz J."/>
            <person name="Larimer F."/>
            <person name="Land M."/>
            <person name="Hauser L."/>
            <person name="Kyrpides N."/>
            <person name="Mikhailova N."/>
            <person name="Brettar I."/>
            <person name="Klappenbach J."/>
            <person name="Konstantinidis K."/>
            <person name="Rodrigues J."/>
            <person name="Tiedje J."/>
            <person name="Richardson P."/>
        </authorList>
    </citation>
    <scope>NUCLEOTIDE SEQUENCE [LARGE SCALE GENOMIC DNA]</scope>
    <source>
        <strain>OS155 / ATCC BAA-1091</strain>
    </source>
</reference>
<evidence type="ECO:0000255" key="1">
    <source>
        <dbReference type="HAMAP-Rule" id="MF_01396"/>
    </source>
</evidence>
<organism>
    <name type="scientific">Shewanella baltica (strain OS155 / ATCC BAA-1091)</name>
    <dbReference type="NCBI Taxonomy" id="325240"/>
    <lineage>
        <taxon>Bacteria</taxon>
        <taxon>Pseudomonadati</taxon>
        <taxon>Pseudomonadota</taxon>
        <taxon>Gammaproteobacteria</taxon>
        <taxon>Alteromonadales</taxon>
        <taxon>Shewanellaceae</taxon>
        <taxon>Shewanella</taxon>
    </lineage>
</organism>
<dbReference type="EMBL" id="CP000563">
    <property type="protein sequence ID" value="ABN63832.1"/>
    <property type="molecule type" value="Genomic_DNA"/>
</dbReference>
<dbReference type="RefSeq" id="WP_006083840.1">
    <property type="nucleotide sequence ID" value="NC_009052.1"/>
</dbReference>
<dbReference type="SMR" id="A3DAR9"/>
<dbReference type="STRING" id="325240.Sbal_4371"/>
<dbReference type="GeneID" id="94725963"/>
<dbReference type="KEGG" id="sbl:Sbal_4371"/>
<dbReference type="HOGENOM" id="CLU_148047_1_0_6"/>
<dbReference type="OrthoDB" id="9811659at2"/>
<dbReference type="Proteomes" id="UP000001557">
    <property type="component" value="Chromosome"/>
</dbReference>
<dbReference type="GO" id="GO:0005886">
    <property type="term" value="C:plasma membrane"/>
    <property type="evidence" value="ECO:0007669"/>
    <property type="project" value="UniProtKB-SubCell"/>
</dbReference>
<dbReference type="GO" id="GO:0045259">
    <property type="term" value="C:proton-transporting ATP synthase complex"/>
    <property type="evidence" value="ECO:0007669"/>
    <property type="project" value="UniProtKB-KW"/>
</dbReference>
<dbReference type="GO" id="GO:0033177">
    <property type="term" value="C:proton-transporting two-sector ATPase complex, proton-transporting domain"/>
    <property type="evidence" value="ECO:0007669"/>
    <property type="project" value="InterPro"/>
</dbReference>
<dbReference type="GO" id="GO:0008289">
    <property type="term" value="F:lipid binding"/>
    <property type="evidence" value="ECO:0007669"/>
    <property type="project" value="UniProtKB-KW"/>
</dbReference>
<dbReference type="GO" id="GO:0046933">
    <property type="term" value="F:proton-transporting ATP synthase activity, rotational mechanism"/>
    <property type="evidence" value="ECO:0007669"/>
    <property type="project" value="UniProtKB-UniRule"/>
</dbReference>
<dbReference type="CDD" id="cd18185">
    <property type="entry name" value="ATP-synt_Fo_c_ATPE"/>
    <property type="match status" value="1"/>
</dbReference>
<dbReference type="FunFam" id="1.20.20.10:FF:000002">
    <property type="entry name" value="ATP synthase subunit c"/>
    <property type="match status" value="1"/>
</dbReference>
<dbReference type="Gene3D" id="1.20.20.10">
    <property type="entry name" value="F1F0 ATP synthase subunit C"/>
    <property type="match status" value="1"/>
</dbReference>
<dbReference type="HAMAP" id="MF_01396">
    <property type="entry name" value="ATP_synth_c_bact"/>
    <property type="match status" value="1"/>
</dbReference>
<dbReference type="InterPro" id="IPR005953">
    <property type="entry name" value="ATP_synth_csu_bac/chlpt"/>
</dbReference>
<dbReference type="InterPro" id="IPR000454">
    <property type="entry name" value="ATP_synth_F0_csu"/>
</dbReference>
<dbReference type="InterPro" id="IPR020537">
    <property type="entry name" value="ATP_synth_F0_csu_DDCD_BS"/>
</dbReference>
<dbReference type="InterPro" id="IPR038662">
    <property type="entry name" value="ATP_synth_F0_csu_sf"/>
</dbReference>
<dbReference type="InterPro" id="IPR002379">
    <property type="entry name" value="ATPase_proteolipid_c-like_dom"/>
</dbReference>
<dbReference type="InterPro" id="IPR035921">
    <property type="entry name" value="F/V-ATP_Csub_sf"/>
</dbReference>
<dbReference type="NCBIfam" id="TIGR01260">
    <property type="entry name" value="ATP_synt_c"/>
    <property type="match status" value="1"/>
</dbReference>
<dbReference type="NCBIfam" id="NF005363">
    <property type="entry name" value="PRK06876.1"/>
    <property type="match status" value="1"/>
</dbReference>
<dbReference type="Pfam" id="PF00137">
    <property type="entry name" value="ATP-synt_C"/>
    <property type="match status" value="1"/>
</dbReference>
<dbReference type="PRINTS" id="PR00124">
    <property type="entry name" value="ATPASEC"/>
</dbReference>
<dbReference type="SUPFAM" id="SSF81333">
    <property type="entry name" value="F1F0 ATP synthase subunit C"/>
    <property type="match status" value="1"/>
</dbReference>
<dbReference type="PROSITE" id="PS00605">
    <property type="entry name" value="ATPASE_C"/>
    <property type="match status" value="1"/>
</dbReference>
<feature type="chain" id="PRO_1000184469" description="ATP synthase subunit c">
    <location>
        <begin position="1"/>
        <end position="83"/>
    </location>
</feature>
<feature type="transmembrane region" description="Helical" evidence="1">
    <location>
        <begin position="10"/>
        <end position="30"/>
    </location>
</feature>
<feature type="transmembrane region" description="Helical" evidence="1">
    <location>
        <begin position="52"/>
        <end position="72"/>
    </location>
</feature>
<feature type="site" description="Reversibly protonated during proton transport" evidence="1">
    <location>
        <position position="60"/>
    </location>
</feature>
<keyword id="KW-0066">ATP synthesis</keyword>
<keyword id="KW-0997">Cell inner membrane</keyword>
<keyword id="KW-1003">Cell membrane</keyword>
<keyword id="KW-0138">CF(0)</keyword>
<keyword id="KW-0375">Hydrogen ion transport</keyword>
<keyword id="KW-0406">Ion transport</keyword>
<keyword id="KW-0446">Lipid-binding</keyword>
<keyword id="KW-0472">Membrane</keyword>
<keyword id="KW-1185">Reference proteome</keyword>
<keyword id="KW-0812">Transmembrane</keyword>
<keyword id="KW-1133">Transmembrane helix</keyword>
<keyword id="KW-0813">Transport</keyword>
<comment type="function">
    <text evidence="1">F(1)F(0) ATP synthase produces ATP from ADP in the presence of a proton or sodium gradient. F-type ATPases consist of two structural domains, F(1) containing the extramembraneous catalytic core and F(0) containing the membrane proton channel, linked together by a central stalk and a peripheral stalk. During catalysis, ATP synthesis in the catalytic domain of F(1) is coupled via a rotary mechanism of the central stalk subunits to proton translocation.</text>
</comment>
<comment type="function">
    <text evidence="1">Key component of the F(0) channel; it plays a direct role in translocation across the membrane. A homomeric c-ring of between 10-14 subunits forms the central stalk rotor element with the F(1) delta and epsilon subunits.</text>
</comment>
<comment type="subunit">
    <text evidence="1">F-type ATPases have 2 components, F(1) - the catalytic core - and F(0) - the membrane proton channel. F(1) has five subunits: alpha(3), beta(3), gamma(1), delta(1), epsilon(1). F(0) has three main subunits: a(1), b(2) and c(10-14). The alpha and beta chains form an alternating ring which encloses part of the gamma chain. F(1) is attached to F(0) by a central stalk formed by the gamma and epsilon chains, while a peripheral stalk is formed by the delta and b chains.</text>
</comment>
<comment type="subcellular location">
    <subcellularLocation>
        <location evidence="1">Cell inner membrane</location>
        <topology evidence="1">Multi-pass membrane protein</topology>
    </subcellularLocation>
</comment>
<comment type="similarity">
    <text evidence="1">Belongs to the ATPase C chain family.</text>
</comment>
<protein>
    <recommendedName>
        <fullName evidence="1">ATP synthase subunit c</fullName>
    </recommendedName>
    <alternativeName>
        <fullName evidence="1">ATP synthase F(0) sector subunit c</fullName>
    </alternativeName>
    <alternativeName>
        <fullName evidence="1">F-type ATPase subunit c</fullName>
        <shortName evidence="1">F-ATPase subunit c</shortName>
    </alternativeName>
    <alternativeName>
        <fullName evidence="1">Lipid-binding protein</fullName>
    </alternativeName>
</protein>